<evidence type="ECO:0000255" key="1">
    <source>
        <dbReference type="HAMAP-Rule" id="MF_01719"/>
    </source>
</evidence>
<keyword id="KW-0029">Amino-acid transport</keyword>
<keyword id="KW-0067">ATP-binding</keyword>
<keyword id="KW-1003">Cell membrane</keyword>
<keyword id="KW-0472">Membrane</keyword>
<keyword id="KW-0547">Nucleotide-binding</keyword>
<keyword id="KW-1278">Translocase</keyword>
<keyword id="KW-0813">Transport</keyword>
<comment type="function">
    <text evidence="1">Part of the ABC transporter complex MetNIQ involved in methionine import. Responsible for energy coupling to the transport system.</text>
</comment>
<comment type="catalytic activity">
    <reaction evidence="1">
        <text>L-methionine(out) + ATP + H2O = L-methionine(in) + ADP + phosphate + H(+)</text>
        <dbReference type="Rhea" id="RHEA:29779"/>
        <dbReference type="ChEBI" id="CHEBI:15377"/>
        <dbReference type="ChEBI" id="CHEBI:15378"/>
        <dbReference type="ChEBI" id="CHEBI:30616"/>
        <dbReference type="ChEBI" id="CHEBI:43474"/>
        <dbReference type="ChEBI" id="CHEBI:57844"/>
        <dbReference type="ChEBI" id="CHEBI:456216"/>
        <dbReference type="EC" id="7.4.2.11"/>
    </reaction>
</comment>
<comment type="catalytic activity">
    <reaction evidence="1">
        <text>D-methionine(out) + ATP + H2O = D-methionine(in) + ADP + phosphate + H(+)</text>
        <dbReference type="Rhea" id="RHEA:29767"/>
        <dbReference type="ChEBI" id="CHEBI:15377"/>
        <dbReference type="ChEBI" id="CHEBI:15378"/>
        <dbReference type="ChEBI" id="CHEBI:30616"/>
        <dbReference type="ChEBI" id="CHEBI:43474"/>
        <dbReference type="ChEBI" id="CHEBI:57932"/>
        <dbReference type="ChEBI" id="CHEBI:456216"/>
        <dbReference type="EC" id="7.4.2.11"/>
    </reaction>
</comment>
<comment type="subunit">
    <text evidence="1">The complex is composed of two ATP-binding proteins (MetN), two transmembrane proteins (MetI) and a solute-binding protein (MetQ).</text>
</comment>
<comment type="subcellular location">
    <subcellularLocation>
        <location evidence="1">Cell membrane</location>
        <topology evidence="1">Peripheral membrane protein</topology>
    </subcellularLocation>
</comment>
<comment type="similarity">
    <text evidence="1">Belongs to the ABC transporter superfamily. Methionine importer (TC 3.A.1.24) family.</text>
</comment>
<sequence>MIEFRQVSKTFNKKKQKIDALKDVSFTVNRNDIFGVIGYSGAGKSTLVRLVNHLEAASNGQVIVDGHDITNYSDKMMRDIKKDIGMIFQHFNLLNSATVFKNVAMPLILSKKSKTEIKQRVTEMLEFVGLSDKKDQFPEELSGGQKQRVAIARALVTNPKILLCDEATSALDPATTASILTLLKNVNQTFGITIMMITHEMRVIKDICNRVAVMEKGQVVETGTVKEVFSHPKTTIAQNFVSTVIQTEPSTSLIRRLNDEQVGDFKDYKIFVEETQVTQPIINDLIQICGREVKILFSSMSEIQGNTVCYMWLRFNMDQQFDDTAINQYFKEKNIQFEEVH</sequence>
<organism>
    <name type="scientific">Staphylococcus aureus (strain MW2)</name>
    <dbReference type="NCBI Taxonomy" id="196620"/>
    <lineage>
        <taxon>Bacteria</taxon>
        <taxon>Bacillati</taxon>
        <taxon>Bacillota</taxon>
        <taxon>Bacilli</taxon>
        <taxon>Bacillales</taxon>
        <taxon>Staphylococcaceae</taxon>
        <taxon>Staphylococcus</taxon>
    </lineage>
</organism>
<feature type="chain" id="PRO_0000270397" description="Methionine import ATP-binding protein MetN 1">
    <location>
        <begin position="1"/>
        <end position="341"/>
    </location>
</feature>
<feature type="domain" description="ABC transporter" evidence="1">
    <location>
        <begin position="2"/>
        <end position="241"/>
    </location>
</feature>
<feature type="binding site" evidence="1">
    <location>
        <begin position="38"/>
        <end position="45"/>
    </location>
    <ligand>
        <name>ATP</name>
        <dbReference type="ChEBI" id="CHEBI:30616"/>
    </ligand>
</feature>
<accession>Q8NY21</accession>
<gene>
    <name evidence="1" type="primary">metN1</name>
    <name type="ordered locus">MW0416</name>
</gene>
<name>METN1_STAAW</name>
<proteinExistence type="inferred from homology"/>
<protein>
    <recommendedName>
        <fullName evidence="1">Methionine import ATP-binding protein MetN 1</fullName>
        <ecNumber evidence="1">7.4.2.11</ecNumber>
    </recommendedName>
</protein>
<reference key="1">
    <citation type="journal article" date="2002" name="Lancet">
        <title>Genome and virulence determinants of high virulence community-acquired MRSA.</title>
        <authorList>
            <person name="Baba T."/>
            <person name="Takeuchi F."/>
            <person name="Kuroda M."/>
            <person name="Yuzawa H."/>
            <person name="Aoki K."/>
            <person name="Oguchi A."/>
            <person name="Nagai Y."/>
            <person name="Iwama N."/>
            <person name="Asano K."/>
            <person name="Naimi T."/>
            <person name="Kuroda H."/>
            <person name="Cui L."/>
            <person name="Yamamoto K."/>
            <person name="Hiramatsu K."/>
        </authorList>
    </citation>
    <scope>NUCLEOTIDE SEQUENCE [LARGE SCALE GENOMIC DNA]</scope>
    <source>
        <strain>MW2</strain>
    </source>
</reference>
<dbReference type="EC" id="7.4.2.11" evidence="1"/>
<dbReference type="EMBL" id="BA000033">
    <property type="protein sequence ID" value="BAB94281.1"/>
    <property type="molecule type" value="Genomic_DNA"/>
</dbReference>
<dbReference type="RefSeq" id="WP_000569289.1">
    <property type="nucleotide sequence ID" value="NC_003923.1"/>
</dbReference>
<dbReference type="SMR" id="Q8NY21"/>
<dbReference type="KEGG" id="sam:MW0416"/>
<dbReference type="HOGENOM" id="CLU_000604_1_3_9"/>
<dbReference type="GO" id="GO:0005886">
    <property type="term" value="C:plasma membrane"/>
    <property type="evidence" value="ECO:0007669"/>
    <property type="project" value="UniProtKB-SubCell"/>
</dbReference>
<dbReference type="GO" id="GO:0033232">
    <property type="term" value="F:ABC-type D-methionine transporter activity"/>
    <property type="evidence" value="ECO:0007669"/>
    <property type="project" value="UniProtKB-EC"/>
</dbReference>
<dbReference type="GO" id="GO:0005524">
    <property type="term" value="F:ATP binding"/>
    <property type="evidence" value="ECO:0007669"/>
    <property type="project" value="UniProtKB-KW"/>
</dbReference>
<dbReference type="GO" id="GO:0016887">
    <property type="term" value="F:ATP hydrolysis activity"/>
    <property type="evidence" value="ECO:0007669"/>
    <property type="project" value="InterPro"/>
</dbReference>
<dbReference type="CDD" id="cd03258">
    <property type="entry name" value="ABC_MetN_methionine_transporter"/>
    <property type="match status" value="1"/>
</dbReference>
<dbReference type="FunFam" id="3.40.50.300:FF:000056">
    <property type="entry name" value="Cell division ATP-binding protein FtsE"/>
    <property type="match status" value="1"/>
</dbReference>
<dbReference type="Gene3D" id="3.30.70.260">
    <property type="match status" value="1"/>
</dbReference>
<dbReference type="Gene3D" id="3.40.50.300">
    <property type="entry name" value="P-loop containing nucleotide triphosphate hydrolases"/>
    <property type="match status" value="1"/>
</dbReference>
<dbReference type="InterPro" id="IPR003593">
    <property type="entry name" value="AAA+_ATPase"/>
</dbReference>
<dbReference type="InterPro" id="IPR003439">
    <property type="entry name" value="ABC_transporter-like_ATP-bd"/>
</dbReference>
<dbReference type="InterPro" id="IPR017871">
    <property type="entry name" value="ABC_transporter-like_CS"/>
</dbReference>
<dbReference type="InterPro" id="IPR045865">
    <property type="entry name" value="ACT-like_dom_sf"/>
</dbReference>
<dbReference type="InterPro" id="IPR041701">
    <property type="entry name" value="MetN_ABC"/>
</dbReference>
<dbReference type="InterPro" id="IPR050086">
    <property type="entry name" value="MetN_ABC_transporter-like"/>
</dbReference>
<dbReference type="InterPro" id="IPR018449">
    <property type="entry name" value="NIL_domain"/>
</dbReference>
<dbReference type="InterPro" id="IPR027417">
    <property type="entry name" value="P-loop_NTPase"/>
</dbReference>
<dbReference type="PANTHER" id="PTHR43166">
    <property type="entry name" value="AMINO ACID IMPORT ATP-BINDING PROTEIN"/>
    <property type="match status" value="1"/>
</dbReference>
<dbReference type="PANTHER" id="PTHR43166:SF30">
    <property type="entry name" value="METHIONINE IMPORT ATP-BINDING PROTEIN METN"/>
    <property type="match status" value="1"/>
</dbReference>
<dbReference type="Pfam" id="PF00005">
    <property type="entry name" value="ABC_tran"/>
    <property type="match status" value="1"/>
</dbReference>
<dbReference type="Pfam" id="PF09383">
    <property type="entry name" value="NIL"/>
    <property type="match status" value="1"/>
</dbReference>
<dbReference type="SMART" id="SM00382">
    <property type="entry name" value="AAA"/>
    <property type="match status" value="1"/>
</dbReference>
<dbReference type="SMART" id="SM00930">
    <property type="entry name" value="NIL"/>
    <property type="match status" value="1"/>
</dbReference>
<dbReference type="SUPFAM" id="SSF55021">
    <property type="entry name" value="ACT-like"/>
    <property type="match status" value="1"/>
</dbReference>
<dbReference type="SUPFAM" id="SSF52540">
    <property type="entry name" value="P-loop containing nucleoside triphosphate hydrolases"/>
    <property type="match status" value="1"/>
</dbReference>
<dbReference type="PROSITE" id="PS00211">
    <property type="entry name" value="ABC_TRANSPORTER_1"/>
    <property type="match status" value="1"/>
</dbReference>
<dbReference type="PROSITE" id="PS50893">
    <property type="entry name" value="ABC_TRANSPORTER_2"/>
    <property type="match status" value="1"/>
</dbReference>
<dbReference type="PROSITE" id="PS51264">
    <property type="entry name" value="METN"/>
    <property type="match status" value="1"/>
</dbReference>